<name>CH60_SALG2</name>
<sequence length="548" mass="57214">MAAKDVKFGNDARVKMLRGVNVLADAVKVTLGPKGRNVVLDKSFGAPTITKDGVSVAREIELEDKFENMGAQMVKEVASKANDAAGDGTTTATVLAQSIITEGLKAVAAGMNPMDLKRGIDKAVAAAVEELKALSVPCSDSKAIAQVGTISANSDETVGKLIAEAMDKVGKEGVITVEDGTGLQDELDVVEGMQFDRGYLSPYFINKPETGAVELESPFILLADKKISNIREMLPVLEAVAKAGKPLLIIAEDVEGEALATLVVNTMRGIVKVAAVKAPGFGDRRKAMLQDIATLTGGTVISEEIGMELEKATLEDLGQAKRVVINKDTTTIIDGVGGEAAIQGRVAQIRQQIEEATSDYDREKLQERVAKLAGGVAVIKVGAATEVEMKEKKARVEDALHATRAAVEEGVVAGGGVALIRVASKIADLKGQNEDQNVGIKVALRAMEAPLRQIVLNCGEEPSVVANTVKGGDGNYGYNAATEEYGNMIDMGILDPTKVTRSALQYAASVAGLMITTECMVTDLPKSDAPDLGAAGGMGGMGGMGGMM</sequence>
<evidence type="ECO:0000255" key="1">
    <source>
        <dbReference type="HAMAP-Rule" id="MF_00600"/>
    </source>
</evidence>
<gene>
    <name evidence="1" type="primary">groEL</name>
    <name evidence="1" type="synonym">groL</name>
    <name type="ordered locus">SG4173</name>
</gene>
<accession>B5R991</accession>
<comment type="function">
    <text evidence="1">Together with its co-chaperonin GroES, plays an essential role in assisting protein folding. The GroEL-GroES system forms a nano-cage that allows encapsulation of the non-native substrate proteins and provides a physical environment optimized to promote and accelerate protein folding.</text>
</comment>
<comment type="catalytic activity">
    <reaction evidence="1">
        <text>ATP + H2O + a folded polypeptide = ADP + phosphate + an unfolded polypeptide.</text>
        <dbReference type="EC" id="5.6.1.7"/>
    </reaction>
</comment>
<comment type="subunit">
    <text evidence="1">Forms a cylinder of 14 subunits composed of two heptameric rings stacked back-to-back. Interacts with the co-chaperonin GroES.</text>
</comment>
<comment type="subcellular location">
    <subcellularLocation>
        <location evidence="1">Cytoplasm</location>
    </subcellularLocation>
</comment>
<comment type="similarity">
    <text evidence="1">Belongs to the chaperonin (HSP60) family.</text>
</comment>
<keyword id="KW-0067">ATP-binding</keyword>
<keyword id="KW-0143">Chaperone</keyword>
<keyword id="KW-0963">Cytoplasm</keyword>
<keyword id="KW-0413">Isomerase</keyword>
<keyword id="KW-0547">Nucleotide-binding</keyword>
<proteinExistence type="inferred from homology"/>
<protein>
    <recommendedName>
        <fullName evidence="1">Chaperonin GroEL</fullName>
        <ecNumber evidence="1">5.6.1.7</ecNumber>
    </recommendedName>
    <alternativeName>
        <fullName evidence="1">60 kDa chaperonin</fullName>
    </alternativeName>
    <alternativeName>
        <fullName evidence="1">Chaperonin-60</fullName>
        <shortName evidence="1">Cpn60</shortName>
    </alternativeName>
</protein>
<feature type="chain" id="PRO_1000130054" description="Chaperonin GroEL">
    <location>
        <begin position="1"/>
        <end position="548"/>
    </location>
</feature>
<feature type="binding site" evidence="1">
    <location>
        <begin position="30"/>
        <end position="33"/>
    </location>
    <ligand>
        <name>ATP</name>
        <dbReference type="ChEBI" id="CHEBI:30616"/>
    </ligand>
</feature>
<feature type="binding site" evidence="1">
    <location>
        <position position="51"/>
    </location>
    <ligand>
        <name>ATP</name>
        <dbReference type="ChEBI" id="CHEBI:30616"/>
    </ligand>
</feature>
<feature type="binding site" evidence="1">
    <location>
        <begin position="87"/>
        <end position="91"/>
    </location>
    <ligand>
        <name>ATP</name>
        <dbReference type="ChEBI" id="CHEBI:30616"/>
    </ligand>
</feature>
<feature type="binding site" evidence="1">
    <location>
        <position position="415"/>
    </location>
    <ligand>
        <name>ATP</name>
        <dbReference type="ChEBI" id="CHEBI:30616"/>
    </ligand>
</feature>
<feature type="binding site" evidence="1">
    <location>
        <begin position="479"/>
        <end position="481"/>
    </location>
    <ligand>
        <name>ATP</name>
        <dbReference type="ChEBI" id="CHEBI:30616"/>
    </ligand>
</feature>
<feature type="binding site" evidence="1">
    <location>
        <position position="495"/>
    </location>
    <ligand>
        <name>ATP</name>
        <dbReference type="ChEBI" id="CHEBI:30616"/>
    </ligand>
</feature>
<reference key="1">
    <citation type="journal article" date="2008" name="Genome Res.">
        <title>Comparative genome analysis of Salmonella enteritidis PT4 and Salmonella gallinarum 287/91 provides insights into evolutionary and host adaptation pathways.</title>
        <authorList>
            <person name="Thomson N.R."/>
            <person name="Clayton D.J."/>
            <person name="Windhorst D."/>
            <person name="Vernikos G."/>
            <person name="Davidson S."/>
            <person name="Churcher C."/>
            <person name="Quail M.A."/>
            <person name="Stevens M."/>
            <person name="Jones M.A."/>
            <person name="Watson M."/>
            <person name="Barron A."/>
            <person name="Layton A."/>
            <person name="Pickard D."/>
            <person name="Kingsley R.A."/>
            <person name="Bignell A."/>
            <person name="Clark L."/>
            <person name="Harris B."/>
            <person name="Ormond D."/>
            <person name="Abdellah Z."/>
            <person name="Brooks K."/>
            <person name="Cherevach I."/>
            <person name="Chillingworth T."/>
            <person name="Woodward J."/>
            <person name="Norberczak H."/>
            <person name="Lord A."/>
            <person name="Arrowsmith C."/>
            <person name="Jagels K."/>
            <person name="Moule S."/>
            <person name="Mungall K."/>
            <person name="Saunders M."/>
            <person name="Whitehead S."/>
            <person name="Chabalgoity J.A."/>
            <person name="Maskell D."/>
            <person name="Humphreys T."/>
            <person name="Roberts M."/>
            <person name="Barrow P.A."/>
            <person name="Dougan G."/>
            <person name="Parkhill J."/>
        </authorList>
    </citation>
    <scope>NUCLEOTIDE SEQUENCE [LARGE SCALE GENOMIC DNA]</scope>
    <source>
        <strain>287/91 / NCTC 13346</strain>
    </source>
</reference>
<organism>
    <name type="scientific">Salmonella gallinarum (strain 287/91 / NCTC 13346)</name>
    <dbReference type="NCBI Taxonomy" id="550538"/>
    <lineage>
        <taxon>Bacteria</taxon>
        <taxon>Pseudomonadati</taxon>
        <taxon>Pseudomonadota</taxon>
        <taxon>Gammaproteobacteria</taxon>
        <taxon>Enterobacterales</taxon>
        <taxon>Enterobacteriaceae</taxon>
        <taxon>Salmonella</taxon>
    </lineage>
</organism>
<dbReference type="EC" id="5.6.1.7" evidence="1"/>
<dbReference type="EMBL" id="AM933173">
    <property type="protein sequence ID" value="CAR39939.1"/>
    <property type="molecule type" value="Genomic_DNA"/>
</dbReference>
<dbReference type="RefSeq" id="WP_000729131.1">
    <property type="nucleotide sequence ID" value="NC_011274.1"/>
</dbReference>
<dbReference type="SMR" id="B5R991"/>
<dbReference type="KEGG" id="seg:SG4173"/>
<dbReference type="HOGENOM" id="CLU_016503_3_0_6"/>
<dbReference type="Proteomes" id="UP000008321">
    <property type="component" value="Chromosome"/>
</dbReference>
<dbReference type="GO" id="GO:0005737">
    <property type="term" value="C:cytoplasm"/>
    <property type="evidence" value="ECO:0007669"/>
    <property type="project" value="UniProtKB-SubCell"/>
</dbReference>
<dbReference type="GO" id="GO:0005524">
    <property type="term" value="F:ATP binding"/>
    <property type="evidence" value="ECO:0007669"/>
    <property type="project" value="UniProtKB-UniRule"/>
</dbReference>
<dbReference type="GO" id="GO:0140662">
    <property type="term" value="F:ATP-dependent protein folding chaperone"/>
    <property type="evidence" value="ECO:0007669"/>
    <property type="project" value="InterPro"/>
</dbReference>
<dbReference type="GO" id="GO:0016853">
    <property type="term" value="F:isomerase activity"/>
    <property type="evidence" value="ECO:0007669"/>
    <property type="project" value="UniProtKB-KW"/>
</dbReference>
<dbReference type="GO" id="GO:0051082">
    <property type="term" value="F:unfolded protein binding"/>
    <property type="evidence" value="ECO:0007669"/>
    <property type="project" value="UniProtKB-UniRule"/>
</dbReference>
<dbReference type="GO" id="GO:0042026">
    <property type="term" value="P:protein refolding"/>
    <property type="evidence" value="ECO:0007669"/>
    <property type="project" value="UniProtKB-UniRule"/>
</dbReference>
<dbReference type="CDD" id="cd03344">
    <property type="entry name" value="GroEL"/>
    <property type="match status" value="1"/>
</dbReference>
<dbReference type="FunFam" id="1.10.560.10:FF:000001">
    <property type="entry name" value="60 kDa chaperonin"/>
    <property type="match status" value="1"/>
</dbReference>
<dbReference type="FunFam" id="3.50.7.10:FF:000001">
    <property type="entry name" value="60 kDa chaperonin"/>
    <property type="match status" value="1"/>
</dbReference>
<dbReference type="Gene3D" id="3.50.7.10">
    <property type="entry name" value="GroEL"/>
    <property type="match status" value="1"/>
</dbReference>
<dbReference type="Gene3D" id="1.10.560.10">
    <property type="entry name" value="GroEL-like equatorial domain"/>
    <property type="match status" value="1"/>
</dbReference>
<dbReference type="Gene3D" id="3.30.260.10">
    <property type="entry name" value="TCP-1-like chaperonin intermediate domain"/>
    <property type="match status" value="1"/>
</dbReference>
<dbReference type="HAMAP" id="MF_00600">
    <property type="entry name" value="CH60"/>
    <property type="match status" value="1"/>
</dbReference>
<dbReference type="InterPro" id="IPR018370">
    <property type="entry name" value="Chaperonin_Cpn60_CS"/>
</dbReference>
<dbReference type="InterPro" id="IPR001844">
    <property type="entry name" value="Cpn60/GroEL"/>
</dbReference>
<dbReference type="InterPro" id="IPR002423">
    <property type="entry name" value="Cpn60/GroEL/TCP-1"/>
</dbReference>
<dbReference type="InterPro" id="IPR027409">
    <property type="entry name" value="GroEL-like_apical_dom_sf"/>
</dbReference>
<dbReference type="InterPro" id="IPR027413">
    <property type="entry name" value="GROEL-like_equatorial_sf"/>
</dbReference>
<dbReference type="InterPro" id="IPR027410">
    <property type="entry name" value="TCP-1-like_intermed_sf"/>
</dbReference>
<dbReference type="NCBIfam" id="TIGR02348">
    <property type="entry name" value="GroEL"/>
    <property type="match status" value="1"/>
</dbReference>
<dbReference type="NCBIfam" id="NF000592">
    <property type="entry name" value="PRK00013.1"/>
    <property type="match status" value="1"/>
</dbReference>
<dbReference type="NCBIfam" id="NF009487">
    <property type="entry name" value="PRK12849.1"/>
    <property type="match status" value="1"/>
</dbReference>
<dbReference type="NCBIfam" id="NF009488">
    <property type="entry name" value="PRK12850.1"/>
    <property type="match status" value="1"/>
</dbReference>
<dbReference type="NCBIfam" id="NF009489">
    <property type="entry name" value="PRK12851.1"/>
    <property type="match status" value="1"/>
</dbReference>
<dbReference type="PANTHER" id="PTHR45633">
    <property type="entry name" value="60 KDA HEAT SHOCK PROTEIN, MITOCHONDRIAL"/>
    <property type="match status" value="1"/>
</dbReference>
<dbReference type="Pfam" id="PF00118">
    <property type="entry name" value="Cpn60_TCP1"/>
    <property type="match status" value="1"/>
</dbReference>
<dbReference type="PRINTS" id="PR00298">
    <property type="entry name" value="CHAPERONIN60"/>
</dbReference>
<dbReference type="SUPFAM" id="SSF52029">
    <property type="entry name" value="GroEL apical domain-like"/>
    <property type="match status" value="1"/>
</dbReference>
<dbReference type="SUPFAM" id="SSF48592">
    <property type="entry name" value="GroEL equatorial domain-like"/>
    <property type="match status" value="1"/>
</dbReference>
<dbReference type="SUPFAM" id="SSF54849">
    <property type="entry name" value="GroEL-intermediate domain like"/>
    <property type="match status" value="1"/>
</dbReference>
<dbReference type="PROSITE" id="PS00296">
    <property type="entry name" value="CHAPERONINS_CPN60"/>
    <property type="match status" value="1"/>
</dbReference>